<sequence length="872" mass="96531">MKELSSAQIRQMWLDFWKSKGHCVEPSANLVPVNDPTLLWINSGVATLKKYFDGSVIPENPRITNAQKSIRTNDIENVGKTARHHTMFEMLGNFSIGDYFRDEAIEWGFELLTSPDWFDFPKDKLYMTYYPDDKDSYNRWIACGVEPSHLVPIEDNFWEIGAGPSGPDTEIFFDRGEDFDPENIGLRLLAEDIENDRYIEIWNIVLSQFNADPAVPRSEYKELPNKNIDTGAGLERLAAVMQGAKTNFETDLFMPIIREVEKLSGKTYDPDGDNMSFKVIADHIRALSFAIGDGALPGNEGRGYVLRRLLRRAVMHGRRLGINETFLYKLVPTVGQIMESYYPEVLEKRDFIEKIVKREEETFARTIDAGSGHLDSLLAQLKAEGKDTLEGKDIFKLYDTYGFPVELTEELAEDAGYKIDHEGFKSAMKEQQDRARAAVVKGGSMGMQNETLAGIVEESRFEYDTYSLESSLSVIIADNERTEAVSEGQALLVFAQTPFYAEMGGQVADTGRIKNDKGDTVAEVVDVQKAPNGQPLHTVNVLASLSVGTNYTLEINKERRLAVEKNHTATHLLHAALHNVIGEHATQAGSLNEEEFLRFDFTHFEAVSNEELRHIEQEVNEQIWNALTITTTETDVETAKEMGAMALFGEKYGKVVRVVQIGNYSVELCGGTHLNNSSEIGLFKIVKEEGIGSGTRRIIAVTGRQAFEAYRNQEDALKEIAATVKAPQLKDAAAKVQALSDSLRDLQKENAELKEKAAAAAAGDVFKDVQEAKGVRFIASQVDVADAGALRTFADNWKQKDYSDVLVLVAAIGEKVNVLVASKTKDVHAGNMIKELAPIVAGRGGGKPDMAMAGGSDASKIAELLAAVAEIV</sequence>
<proteinExistence type="inferred from homology"/>
<dbReference type="EC" id="6.1.1.7" evidence="1"/>
<dbReference type="EMBL" id="AE004092">
    <property type="protein sequence ID" value="AAK34208.1"/>
    <property type="molecule type" value="Genomic_DNA"/>
</dbReference>
<dbReference type="EMBL" id="CP000017">
    <property type="protein sequence ID" value="AAZ51750.1"/>
    <property type="molecule type" value="Genomic_DNA"/>
</dbReference>
<dbReference type="RefSeq" id="NP_269487.1">
    <property type="nucleotide sequence ID" value="NC_002737.2"/>
</dbReference>
<dbReference type="SMR" id="Q99Z57"/>
<dbReference type="PaxDb" id="1314-HKU360_01167"/>
<dbReference type="KEGG" id="spy:SPy_1389"/>
<dbReference type="KEGG" id="spz:M5005_Spy1132"/>
<dbReference type="PATRIC" id="fig|160490.10.peg.1211"/>
<dbReference type="HOGENOM" id="CLU_004485_1_1_9"/>
<dbReference type="OMA" id="NKKDNFW"/>
<dbReference type="Proteomes" id="UP000000750">
    <property type="component" value="Chromosome"/>
</dbReference>
<dbReference type="GO" id="GO:0005829">
    <property type="term" value="C:cytosol"/>
    <property type="evidence" value="ECO:0007669"/>
    <property type="project" value="TreeGrafter"/>
</dbReference>
<dbReference type="GO" id="GO:0004813">
    <property type="term" value="F:alanine-tRNA ligase activity"/>
    <property type="evidence" value="ECO:0007669"/>
    <property type="project" value="UniProtKB-UniRule"/>
</dbReference>
<dbReference type="GO" id="GO:0002161">
    <property type="term" value="F:aminoacyl-tRNA deacylase activity"/>
    <property type="evidence" value="ECO:0007669"/>
    <property type="project" value="TreeGrafter"/>
</dbReference>
<dbReference type="GO" id="GO:0005524">
    <property type="term" value="F:ATP binding"/>
    <property type="evidence" value="ECO:0007669"/>
    <property type="project" value="UniProtKB-UniRule"/>
</dbReference>
<dbReference type="GO" id="GO:0140096">
    <property type="term" value="F:catalytic activity, acting on a protein"/>
    <property type="evidence" value="ECO:0007669"/>
    <property type="project" value="UniProtKB-ARBA"/>
</dbReference>
<dbReference type="GO" id="GO:0016740">
    <property type="term" value="F:transferase activity"/>
    <property type="evidence" value="ECO:0007669"/>
    <property type="project" value="UniProtKB-ARBA"/>
</dbReference>
<dbReference type="GO" id="GO:0000049">
    <property type="term" value="F:tRNA binding"/>
    <property type="evidence" value="ECO:0007669"/>
    <property type="project" value="UniProtKB-KW"/>
</dbReference>
<dbReference type="GO" id="GO:0008270">
    <property type="term" value="F:zinc ion binding"/>
    <property type="evidence" value="ECO:0007669"/>
    <property type="project" value="UniProtKB-UniRule"/>
</dbReference>
<dbReference type="GO" id="GO:0006419">
    <property type="term" value="P:alanyl-tRNA aminoacylation"/>
    <property type="evidence" value="ECO:0007669"/>
    <property type="project" value="UniProtKB-UniRule"/>
</dbReference>
<dbReference type="CDD" id="cd00673">
    <property type="entry name" value="AlaRS_core"/>
    <property type="match status" value="1"/>
</dbReference>
<dbReference type="FunFam" id="3.10.310.40:FF:000001">
    <property type="entry name" value="Alanine--tRNA ligase"/>
    <property type="match status" value="1"/>
</dbReference>
<dbReference type="FunFam" id="3.30.54.20:FF:000001">
    <property type="entry name" value="Alanine--tRNA ligase"/>
    <property type="match status" value="1"/>
</dbReference>
<dbReference type="FunFam" id="3.30.930.10:FF:000046">
    <property type="entry name" value="Alanine--tRNA ligase"/>
    <property type="match status" value="1"/>
</dbReference>
<dbReference type="FunFam" id="3.30.980.10:FF:000004">
    <property type="entry name" value="Alanine--tRNA ligase, cytoplasmic"/>
    <property type="match status" value="1"/>
</dbReference>
<dbReference type="Gene3D" id="2.40.30.130">
    <property type="match status" value="1"/>
</dbReference>
<dbReference type="Gene3D" id="3.10.310.40">
    <property type="match status" value="1"/>
</dbReference>
<dbReference type="Gene3D" id="3.30.54.20">
    <property type="match status" value="1"/>
</dbReference>
<dbReference type="Gene3D" id="6.10.250.550">
    <property type="match status" value="1"/>
</dbReference>
<dbReference type="Gene3D" id="3.30.930.10">
    <property type="entry name" value="Bira Bifunctional Protein, Domain 2"/>
    <property type="match status" value="1"/>
</dbReference>
<dbReference type="Gene3D" id="3.30.980.10">
    <property type="entry name" value="Threonyl-trna Synthetase, Chain A, domain 2"/>
    <property type="match status" value="1"/>
</dbReference>
<dbReference type="HAMAP" id="MF_00036_B">
    <property type="entry name" value="Ala_tRNA_synth_B"/>
    <property type="match status" value="1"/>
</dbReference>
<dbReference type="InterPro" id="IPR045864">
    <property type="entry name" value="aa-tRNA-synth_II/BPL/LPL"/>
</dbReference>
<dbReference type="InterPro" id="IPR002318">
    <property type="entry name" value="Ala-tRNA-lgiase_IIc"/>
</dbReference>
<dbReference type="InterPro" id="IPR018162">
    <property type="entry name" value="Ala-tRNA-ligase_IIc_anticod-bd"/>
</dbReference>
<dbReference type="InterPro" id="IPR018165">
    <property type="entry name" value="Ala-tRNA-synth_IIc_core"/>
</dbReference>
<dbReference type="InterPro" id="IPR018164">
    <property type="entry name" value="Ala-tRNA-synth_IIc_N"/>
</dbReference>
<dbReference type="InterPro" id="IPR050058">
    <property type="entry name" value="Ala-tRNA_ligase"/>
</dbReference>
<dbReference type="InterPro" id="IPR023033">
    <property type="entry name" value="Ala_tRNA_ligase_euk/bac"/>
</dbReference>
<dbReference type="InterPro" id="IPR003156">
    <property type="entry name" value="DHHA1_dom"/>
</dbReference>
<dbReference type="InterPro" id="IPR018163">
    <property type="entry name" value="Thr/Ala-tRNA-synth_IIc_edit"/>
</dbReference>
<dbReference type="InterPro" id="IPR009000">
    <property type="entry name" value="Transl_B-barrel_sf"/>
</dbReference>
<dbReference type="InterPro" id="IPR012947">
    <property type="entry name" value="tRNA_SAD"/>
</dbReference>
<dbReference type="NCBIfam" id="TIGR00344">
    <property type="entry name" value="alaS"/>
    <property type="match status" value="1"/>
</dbReference>
<dbReference type="PANTHER" id="PTHR11777:SF9">
    <property type="entry name" value="ALANINE--TRNA LIGASE, CYTOPLASMIC"/>
    <property type="match status" value="1"/>
</dbReference>
<dbReference type="PANTHER" id="PTHR11777">
    <property type="entry name" value="ALANYL-TRNA SYNTHETASE"/>
    <property type="match status" value="1"/>
</dbReference>
<dbReference type="Pfam" id="PF02272">
    <property type="entry name" value="DHHA1"/>
    <property type="match status" value="1"/>
</dbReference>
<dbReference type="Pfam" id="PF01411">
    <property type="entry name" value="tRNA-synt_2c"/>
    <property type="match status" value="1"/>
</dbReference>
<dbReference type="Pfam" id="PF07973">
    <property type="entry name" value="tRNA_SAD"/>
    <property type="match status" value="1"/>
</dbReference>
<dbReference type="PRINTS" id="PR00980">
    <property type="entry name" value="TRNASYNTHALA"/>
</dbReference>
<dbReference type="SMART" id="SM00863">
    <property type="entry name" value="tRNA_SAD"/>
    <property type="match status" value="1"/>
</dbReference>
<dbReference type="SUPFAM" id="SSF55681">
    <property type="entry name" value="Class II aaRS and biotin synthetases"/>
    <property type="match status" value="1"/>
</dbReference>
<dbReference type="SUPFAM" id="SSF101353">
    <property type="entry name" value="Putative anticodon-binding domain of alanyl-tRNA synthetase (AlaRS)"/>
    <property type="match status" value="1"/>
</dbReference>
<dbReference type="SUPFAM" id="SSF55186">
    <property type="entry name" value="ThrRS/AlaRS common domain"/>
    <property type="match status" value="1"/>
</dbReference>
<dbReference type="SUPFAM" id="SSF50447">
    <property type="entry name" value="Translation proteins"/>
    <property type="match status" value="1"/>
</dbReference>
<dbReference type="PROSITE" id="PS50860">
    <property type="entry name" value="AA_TRNA_LIGASE_II_ALA"/>
    <property type="match status" value="1"/>
</dbReference>
<keyword id="KW-0030">Aminoacyl-tRNA synthetase</keyword>
<keyword id="KW-0067">ATP-binding</keyword>
<keyword id="KW-0963">Cytoplasm</keyword>
<keyword id="KW-0436">Ligase</keyword>
<keyword id="KW-0479">Metal-binding</keyword>
<keyword id="KW-0547">Nucleotide-binding</keyword>
<keyword id="KW-0648">Protein biosynthesis</keyword>
<keyword id="KW-1185">Reference proteome</keyword>
<keyword id="KW-0694">RNA-binding</keyword>
<keyword id="KW-0820">tRNA-binding</keyword>
<keyword id="KW-0862">Zinc</keyword>
<comment type="function">
    <text evidence="1">Catalyzes the attachment of alanine to tRNA(Ala) in a two-step reaction: alanine is first activated by ATP to form Ala-AMP and then transferred to the acceptor end of tRNA(Ala). Also edits incorrectly charged Ser-tRNA(Ala) and Gly-tRNA(Ala) via its editing domain.</text>
</comment>
<comment type="catalytic activity">
    <reaction evidence="1">
        <text>tRNA(Ala) + L-alanine + ATP = L-alanyl-tRNA(Ala) + AMP + diphosphate</text>
        <dbReference type="Rhea" id="RHEA:12540"/>
        <dbReference type="Rhea" id="RHEA-COMP:9657"/>
        <dbReference type="Rhea" id="RHEA-COMP:9923"/>
        <dbReference type="ChEBI" id="CHEBI:30616"/>
        <dbReference type="ChEBI" id="CHEBI:33019"/>
        <dbReference type="ChEBI" id="CHEBI:57972"/>
        <dbReference type="ChEBI" id="CHEBI:78442"/>
        <dbReference type="ChEBI" id="CHEBI:78497"/>
        <dbReference type="ChEBI" id="CHEBI:456215"/>
        <dbReference type="EC" id="6.1.1.7"/>
    </reaction>
</comment>
<comment type="cofactor">
    <cofactor evidence="1">
        <name>Zn(2+)</name>
        <dbReference type="ChEBI" id="CHEBI:29105"/>
    </cofactor>
    <text evidence="1">Binds 1 zinc ion per subunit.</text>
</comment>
<comment type="subcellular location">
    <subcellularLocation>
        <location evidence="1">Cytoplasm</location>
    </subcellularLocation>
</comment>
<comment type="domain">
    <text evidence="1">Consists of three domains; the N-terminal catalytic domain, the editing domain and the C-terminal C-Ala domain. The editing domain removes incorrectly charged amino acids, while the C-Ala domain, along with tRNA(Ala), serves as a bridge to cooperatively bring together the editing and aminoacylation centers thus stimulating deacylation of misacylated tRNAs.</text>
</comment>
<comment type="similarity">
    <text evidence="1">Belongs to the class-II aminoacyl-tRNA synthetase family.</text>
</comment>
<feature type="chain" id="PRO_0000075216" description="Alanine--tRNA ligase">
    <location>
        <begin position="1"/>
        <end position="872"/>
    </location>
</feature>
<feature type="binding site" evidence="1">
    <location>
        <position position="567"/>
    </location>
    <ligand>
        <name>Zn(2+)</name>
        <dbReference type="ChEBI" id="CHEBI:29105"/>
    </ligand>
</feature>
<feature type="binding site" evidence="1">
    <location>
        <position position="571"/>
    </location>
    <ligand>
        <name>Zn(2+)</name>
        <dbReference type="ChEBI" id="CHEBI:29105"/>
    </ligand>
</feature>
<feature type="binding site" evidence="1">
    <location>
        <position position="669"/>
    </location>
    <ligand>
        <name>Zn(2+)</name>
        <dbReference type="ChEBI" id="CHEBI:29105"/>
    </ligand>
</feature>
<feature type="binding site" evidence="1">
    <location>
        <position position="673"/>
    </location>
    <ligand>
        <name>Zn(2+)</name>
        <dbReference type="ChEBI" id="CHEBI:29105"/>
    </ligand>
</feature>
<evidence type="ECO:0000255" key="1">
    <source>
        <dbReference type="HAMAP-Rule" id="MF_00036"/>
    </source>
</evidence>
<name>SYA_STRP1</name>
<accession>Q99Z57</accession>
<accession>Q48Y25</accession>
<organism>
    <name type="scientific">Streptococcus pyogenes serotype M1</name>
    <dbReference type="NCBI Taxonomy" id="301447"/>
    <lineage>
        <taxon>Bacteria</taxon>
        <taxon>Bacillati</taxon>
        <taxon>Bacillota</taxon>
        <taxon>Bacilli</taxon>
        <taxon>Lactobacillales</taxon>
        <taxon>Streptococcaceae</taxon>
        <taxon>Streptococcus</taxon>
    </lineage>
</organism>
<gene>
    <name evidence="1" type="primary">alaS</name>
    <name type="ordered locus">SPy_1389</name>
    <name type="ordered locus">M5005_Spy1132</name>
</gene>
<protein>
    <recommendedName>
        <fullName evidence="1">Alanine--tRNA ligase</fullName>
        <ecNumber evidence="1">6.1.1.7</ecNumber>
    </recommendedName>
    <alternativeName>
        <fullName evidence="1">Alanyl-tRNA synthetase</fullName>
        <shortName evidence="1">AlaRS</shortName>
    </alternativeName>
</protein>
<reference key="1">
    <citation type="journal article" date="2001" name="Proc. Natl. Acad. Sci. U.S.A.">
        <title>Complete genome sequence of an M1 strain of Streptococcus pyogenes.</title>
        <authorList>
            <person name="Ferretti J.J."/>
            <person name="McShan W.M."/>
            <person name="Ajdic D.J."/>
            <person name="Savic D.J."/>
            <person name="Savic G."/>
            <person name="Lyon K."/>
            <person name="Primeaux C."/>
            <person name="Sezate S."/>
            <person name="Suvorov A.N."/>
            <person name="Kenton S."/>
            <person name="Lai H.S."/>
            <person name="Lin S.P."/>
            <person name="Qian Y."/>
            <person name="Jia H.G."/>
            <person name="Najar F.Z."/>
            <person name="Ren Q."/>
            <person name="Zhu H."/>
            <person name="Song L."/>
            <person name="White J."/>
            <person name="Yuan X."/>
            <person name="Clifton S.W."/>
            <person name="Roe B.A."/>
            <person name="McLaughlin R.E."/>
        </authorList>
    </citation>
    <scope>NUCLEOTIDE SEQUENCE [LARGE SCALE GENOMIC DNA]</scope>
    <source>
        <strain>ATCC 700294 / SF370 / Serotype M1</strain>
    </source>
</reference>
<reference key="2">
    <citation type="journal article" date="2005" name="J. Infect. Dis.">
        <title>Evolutionary origin and emergence of a highly successful clone of serotype M1 group A Streptococcus involved multiple horizontal gene transfer events.</title>
        <authorList>
            <person name="Sumby P."/>
            <person name="Porcella S.F."/>
            <person name="Madrigal A.G."/>
            <person name="Barbian K.D."/>
            <person name="Virtaneva K."/>
            <person name="Ricklefs S.M."/>
            <person name="Sturdevant D.E."/>
            <person name="Graham M.R."/>
            <person name="Vuopio-Varkila J."/>
            <person name="Hoe N.P."/>
            <person name="Musser J.M."/>
        </authorList>
    </citation>
    <scope>NUCLEOTIDE SEQUENCE [LARGE SCALE GENOMIC DNA]</scope>
    <source>
        <strain>ATCC BAA-947 / MGAS5005 / Serotype M1</strain>
    </source>
</reference>